<protein>
    <recommendedName>
        <fullName evidence="1">Arginine N-succinyltransferase</fullName>
        <shortName evidence="1">AST</shortName>
        <ecNumber evidence="1">2.3.1.109</ecNumber>
    </recommendedName>
    <alternativeName>
        <fullName evidence="1">AOST</fullName>
    </alternativeName>
</protein>
<reference key="1">
    <citation type="submission" date="2007-11" db="EMBL/GenBank/DDBJ databases">
        <authorList>
            <consortium name="The Salmonella enterica serovar Paratyphi B Genome Sequencing Project"/>
            <person name="McClelland M."/>
            <person name="Sanderson E.K."/>
            <person name="Porwollik S."/>
            <person name="Spieth J."/>
            <person name="Clifton W.S."/>
            <person name="Fulton R."/>
            <person name="Cordes M."/>
            <person name="Wollam A."/>
            <person name="Shah N."/>
            <person name="Pepin K."/>
            <person name="Bhonagiri V."/>
            <person name="Nash W."/>
            <person name="Johnson M."/>
            <person name="Thiruvilangam P."/>
            <person name="Wilson R."/>
        </authorList>
    </citation>
    <scope>NUCLEOTIDE SEQUENCE [LARGE SCALE GENOMIC DNA]</scope>
    <source>
        <strain>ATCC BAA-1250 / SPB7</strain>
    </source>
</reference>
<feature type="chain" id="PRO_1000085392" description="Arginine N-succinyltransferase">
    <location>
        <begin position="1"/>
        <end position="344"/>
    </location>
</feature>
<feature type="active site" description="Proton donor" evidence="1">
    <location>
        <position position="229"/>
    </location>
</feature>
<feature type="binding site" evidence="1">
    <location>
        <position position="125"/>
    </location>
    <ligand>
        <name>succinyl-CoA</name>
        <dbReference type="ChEBI" id="CHEBI:57292"/>
    </ligand>
</feature>
<name>ASTA_SALPB</name>
<organism>
    <name type="scientific">Salmonella paratyphi B (strain ATCC BAA-1250 / SPB7)</name>
    <dbReference type="NCBI Taxonomy" id="1016998"/>
    <lineage>
        <taxon>Bacteria</taxon>
        <taxon>Pseudomonadati</taxon>
        <taxon>Pseudomonadota</taxon>
        <taxon>Gammaproteobacteria</taxon>
        <taxon>Enterobacterales</taxon>
        <taxon>Enterobacteriaceae</taxon>
        <taxon>Salmonella</taxon>
    </lineage>
</organism>
<proteinExistence type="inferred from homology"/>
<keyword id="KW-0012">Acyltransferase</keyword>
<keyword id="KW-0056">Arginine metabolism</keyword>
<keyword id="KW-0808">Transferase</keyword>
<gene>
    <name evidence="1" type="primary">astA</name>
    <name type="ordered locus">SPAB_02039</name>
</gene>
<dbReference type="EC" id="2.3.1.109" evidence="1"/>
<dbReference type="EMBL" id="CP000886">
    <property type="protein sequence ID" value="ABX67426.1"/>
    <property type="molecule type" value="Genomic_DNA"/>
</dbReference>
<dbReference type="RefSeq" id="WP_001263889.1">
    <property type="nucleotide sequence ID" value="NC_010102.1"/>
</dbReference>
<dbReference type="SMR" id="A9N277"/>
<dbReference type="KEGG" id="spq:SPAB_02039"/>
<dbReference type="PATRIC" id="fig|1016998.12.peg.1927"/>
<dbReference type="HOGENOM" id="CLU_057655_0_0_6"/>
<dbReference type="BioCyc" id="SENT1016998:SPAB_RS08325-MONOMER"/>
<dbReference type="UniPathway" id="UPA00185">
    <property type="reaction ID" value="UER00279"/>
</dbReference>
<dbReference type="Proteomes" id="UP000008556">
    <property type="component" value="Chromosome"/>
</dbReference>
<dbReference type="GO" id="GO:0008791">
    <property type="term" value="F:arginine N-succinyltransferase activity"/>
    <property type="evidence" value="ECO:0007669"/>
    <property type="project" value="UniProtKB-UniRule"/>
</dbReference>
<dbReference type="GO" id="GO:0019544">
    <property type="term" value="P:arginine catabolic process to glutamate"/>
    <property type="evidence" value="ECO:0007669"/>
    <property type="project" value="UniProtKB-UniRule"/>
</dbReference>
<dbReference type="GO" id="GO:0019545">
    <property type="term" value="P:arginine catabolic process to succinate"/>
    <property type="evidence" value="ECO:0007669"/>
    <property type="project" value="UniProtKB-UniRule"/>
</dbReference>
<dbReference type="Gene3D" id="2.40.40.20">
    <property type="match status" value="1"/>
</dbReference>
<dbReference type="Gene3D" id="3.40.630.30">
    <property type="match status" value="1"/>
</dbReference>
<dbReference type="HAMAP" id="MF_01171">
    <property type="entry name" value="AstA"/>
    <property type="match status" value="1"/>
</dbReference>
<dbReference type="InterPro" id="IPR016181">
    <property type="entry name" value="Acyl_CoA_acyltransferase"/>
</dbReference>
<dbReference type="InterPro" id="IPR007041">
    <property type="entry name" value="Arg_succinylTrfase_AstA/AruG"/>
</dbReference>
<dbReference type="InterPro" id="IPR017650">
    <property type="entry name" value="Arginine_N-succinylTrfase"/>
</dbReference>
<dbReference type="NCBIfam" id="TIGR03243">
    <property type="entry name" value="arg_catab_AOST"/>
    <property type="match status" value="1"/>
</dbReference>
<dbReference type="NCBIfam" id="TIGR03244">
    <property type="entry name" value="arg_catab_AstA"/>
    <property type="match status" value="1"/>
</dbReference>
<dbReference type="NCBIfam" id="NF007770">
    <property type="entry name" value="PRK10456.1"/>
    <property type="match status" value="1"/>
</dbReference>
<dbReference type="PANTHER" id="PTHR30420:SF1">
    <property type="entry name" value="ARGININE N-SUCCINYLTRANSFERASE"/>
    <property type="match status" value="1"/>
</dbReference>
<dbReference type="PANTHER" id="PTHR30420">
    <property type="entry name" value="N-SUCCINYLARGININE DIHYDROLASE"/>
    <property type="match status" value="1"/>
</dbReference>
<dbReference type="Pfam" id="PF04958">
    <property type="entry name" value="AstA"/>
    <property type="match status" value="1"/>
</dbReference>
<dbReference type="SUPFAM" id="SSF55729">
    <property type="entry name" value="Acyl-CoA N-acyltransferases (Nat)"/>
    <property type="match status" value="1"/>
</dbReference>
<evidence type="ECO:0000255" key="1">
    <source>
        <dbReference type="HAMAP-Rule" id="MF_01171"/>
    </source>
</evidence>
<sequence length="344" mass="38278">MRVIRPVEHADIAALMQLAGKTGGGLTSLPANEATLAARIERALKTWSGELPKGEQGYVFVLEDSETGEVGGICAIEVAVGLNDPWYNYRVGTLVHASKELNVYNALPTLFLSNDHTGSSELCTLFLDPEWRKEGNGYLLSKSRFMFMAAFRDKFNEKVVAEMRGVIDEHGYSPFWQSLGKRFFSMDFSRADFLCGTGQKAFIAELMPKHPIYTHFLSEEAQAVIGEVHPQTAPARAVLEKEGFRYRHYIDIFDGGPTLECDIDRVRAIRKSRLVEVAEGQPAPGDYPACLVANENYHHFRAALVRADPQTSRLVLTAAQLDALKCRAGDHVRLVRLCAEEKTV</sequence>
<accession>A9N277</accession>
<comment type="function">
    <text evidence="1">Catalyzes the transfer of succinyl-CoA to arginine to produce N(2)-succinylarginine.</text>
</comment>
<comment type="catalytic activity">
    <reaction evidence="1">
        <text>succinyl-CoA + L-arginine = N(2)-succinyl-L-arginine + CoA + H(+)</text>
        <dbReference type="Rhea" id="RHEA:15185"/>
        <dbReference type="ChEBI" id="CHEBI:15378"/>
        <dbReference type="ChEBI" id="CHEBI:32682"/>
        <dbReference type="ChEBI" id="CHEBI:57287"/>
        <dbReference type="ChEBI" id="CHEBI:57292"/>
        <dbReference type="ChEBI" id="CHEBI:58241"/>
        <dbReference type="EC" id="2.3.1.109"/>
    </reaction>
</comment>
<comment type="pathway">
    <text evidence="1">Amino-acid degradation; L-arginine degradation via AST pathway; L-glutamate and succinate from L-arginine: step 1/5.</text>
</comment>
<comment type="similarity">
    <text evidence="1">Belongs to the arginine N-succinyltransferase family.</text>
</comment>